<reference key="1">
    <citation type="journal article" date="2014" name="Stand. Genomic Sci.">
        <title>Complete genome sequence of Burkholderia phymatum STM815(T), a broad host range and efficient nitrogen-fixing symbiont of Mimosa species.</title>
        <authorList>
            <person name="Moulin L."/>
            <person name="Klonowska A."/>
            <person name="Caroline B."/>
            <person name="Booth K."/>
            <person name="Vriezen J.A."/>
            <person name="Melkonian R."/>
            <person name="James E.K."/>
            <person name="Young J.P."/>
            <person name="Bena G."/>
            <person name="Hauser L."/>
            <person name="Land M."/>
            <person name="Kyrpides N."/>
            <person name="Bruce D."/>
            <person name="Chain P."/>
            <person name="Copeland A."/>
            <person name="Pitluck S."/>
            <person name="Woyke T."/>
            <person name="Lizotte-Waniewski M."/>
            <person name="Bristow J."/>
            <person name="Riley M."/>
        </authorList>
    </citation>
    <scope>NUCLEOTIDE SEQUENCE [LARGE SCALE GENOMIC DNA]</scope>
    <source>
        <strain>DSM 17167 / CIP 108236 / LMG 21445 / STM815</strain>
    </source>
</reference>
<keyword id="KW-1185">Reference proteome</keyword>
<keyword id="KW-0687">Ribonucleoprotein</keyword>
<keyword id="KW-0689">Ribosomal protein</keyword>
<keyword id="KW-0694">RNA-binding</keyword>
<keyword id="KW-0699">rRNA-binding</keyword>
<keyword id="KW-0820">tRNA-binding</keyword>
<comment type="function">
    <text evidence="1">One of the primary rRNA binding proteins, it binds directly to 16S rRNA where it nucleates assembly of the head domain of the 30S subunit. Is located at the subunit interface close to the decoding center, probably blocks exit of the E-site tRNA.</text>
</comment>
<comment type="subunit">
    <text evidence="1">Part of the 30S ribosomal subunit. Contacts proteins S9 and S11.</text>
</comment>
<comment type="similarity">
    <text evidence="1">Belongs to the universal ribosomal protein uS7 family.</text>
</comment>
<name>RS7_PARP8</name>
<gene>
    <name evidence="1" type="primary">rpsG</name>
    <name type="ordered locus">Bphy_2844</name>
</gene>
<evidence type="ECO:0000255" key="1">
    <source>
        <dbReference type="HAMAP-Rule" id="MF_00480"/>
    </source>
</evidence>
<evidence type="ECO:0000305" key="2"/>
<accession>B2JIH0</accession>
<dbReference type="EMBL" id="CP001043">
    <property type="protein sequence ID" value="ACC72016.1"/>
    <property type="molecule type" value="Genomic_DNA"/>
</dbReference>
<dbReference type="RefSeq" id="WP_006053291.1">
    <property type="nucleotide sequence ID" value="NZ_CADFGH010000044.1"/>
</dbReference>
<dbReference type="SMR" id="B2JIH0"/>
<dbReference type="STRING" id="391038.Bphy_2844"/>
<dbReference type="GeneID" id="97311162"/>
<dbReference type="KEGG" id="bph:Bphy_2844"/>
<dbReference type="eggNOG" id="COG0049">
    <property type="taxonomic scope" value="Bacteria"/>
</dbReference>
<dbReference type="HOGENOM" id="CLU_072226_1_1_4"/>
<dbReference type="OrthoDB" id="9807653at2"/>
<dbReference type="Proteomes" id="UP000001192">
    <property type="component" value="Chromosome 1"/>
</dbReference>
<dbReference type="GO" id="GO:0015935">
    <property type="term" value="C:small ribosomal subunit"/>
    <property type="evidence" value="ECO:0007669"/>
    <property type="project" value="InterPro"/>
</dbReference>
<dbReference type="GO" id="GO:0019843">
    <property type="term" value="F:rRNA binding"/>
    <property type="evidence" value="ECO:0007669"/>
    <property type="project" value="UniProtKB-UniRule"/>
</dbReference>
<dbReference type="GO" id="GO:0003735">
    <property type="term" value="F:structural constituent of ribosome"/>
    <property type="evidence" value="ECO:0007669"/>
    <property type="project" value="InterPro"/>
</dbReference>
<dbReference type="GO" id="GO:0000049">
    <property type="term" value="F:tRNA binding"/>
    <property type="evidence" value="ECO:0007669"/>
    <property type="project" value="UniProtKB-UniRule"/>
</dbReference>
<dbReference type="GO" id="GO:0006412">
    <property type="term" value="P:translation"/>
    <property type="evidence" value="ECO:0007669"/>
    <property type="project" value="UniProtKB-UniRule"/>
</dbReference>
<dbReference type="CDD" id="cd14869">
    <property type="entry name" value="uS7_Bacteria"/>
    <property type="match status" value="1"/>
</dbReference>
<dbReference type="FunFam" id="1.10.455.10:FF:000001">
    <property type="entry name" value="30S ribosomal protein S7"/>
    <property type="match status" value="1"/>
</dbReference>
<dbReference type="Gene3D" id="1.10.455.10">
    <property type="entry name" value="Ribosomal protein S7 domain"/>
    <property type="match status" value="1"/>
</dbReference>
<dbReference type="HAMAP" id="MF_00480_B">
    <property type="entry name" value="Ribosomal_uS7_B"/>
    <property type="match status" value="1"/>
</dbReference>
<dbReference type="InterPro" id="IPR000235">
    <property type="entry name" value="Ribosomal_uS7"/>
</dbReference>
<dbReference type="InterPro" id="IPR005717">
    <property type="entry name" value="Ribosomal_uS7_bac/org-type"/>
</dbReference>
<dbReference type="InterPro" id="IPR020606">
    <property type="entry name" value="Ribosomal_uS7_CS"/>
</dbReference>
<dbReference type="InterPro" id="IPR023798">
    <property type="entry name" value="Ribosomal_uS7_dom"/>
</dbReference>
<dbReference type="InterPro" id="IPR036823">
    <property type="entry name" value="Ribosomal_uS7_dom_sf"/>
</dbReference>
<dbReference type="NCBIfam" id="TIGR01029">
    <property type="entry name" value="rpsG_bact"/>
    <property type="match status" value="1"/>
</dbReference>
<dbReference type="PANTHER" id="PTHR11205">
    <property type="entry name" value="RIBOSOMAL PROTEIN S7"/>
    <property type="match status" value="1"/>
</dbReference>
<dbReference type="Pfam" id="PF00177">
    <property type="entry name" value="Ribosomal_S7"/>
    <property type="match status" value="1"/>
</dbReference>
<dbReference type="PIRSF" id="PIRSF002122">
    <property type="entry name" value="RPS7p_RPS7a_RPS5e_RPS7o"/>
    <property type="match status" value="1"/>
</dbReference>
<dbReference type="SUPFAM" id="SSF47973">
    <property type="entry name" value="Ribosomal protein S7"/>
    <property type="match status" value="1"/>
</dbReference>
<dbReference type="PROSITE" id="PS00052">
    <property type="entry name" value="RIBOSOMAL_S7"/>
    <property type="match status" value="1"/>
</dbReference>
<proteinExistence type="inferred from homology"/>
<sequence length="156" mass="17610">MPRRREVPKREVLPDPKFGNVDVAKFMNVLMLSGKKSVAERIVYGAFEQIQTKGGKDPLEVFTVALNNVKPVVEVKSRRVGGANYQVPVEVRPSRRMALAMRWLREAAKKRSEKSMALRLAGELSEAAEGRGGAMKKRDEVHRMAEANKAFSHFRF</sequence>
<organism>
    <name type="scientific">Paraburkholderia phymatum (strain DSM 17167 / CIP 108236 / LMG 21445 / STM815)</name>
    <name type="common">Burkholderia phymatum</name>
    <dbReference type="NCBI Taxonomy" id="391038"/>
    <lineage>
        <taxon>Bacteria</taxon>
        <taxon>Pseudomonadati</taxon>
        <taxon>Pseudomonadota</taxon>
        <taxon>Betaproteobacteria</taxon>
        <taxon>Burkholderiales</taxon>
        <taxon>Burkholderiaceae</taxon>
        <taxon>Paraburkholderia</taxon>
    </lineage>
</organism>
<feature type="chain" id="PRO_1000125909" description="Small ribosomal subunit protein uS7">
    <location>
        <begin position="1"/>
        <end position="156"/>
    </location>
</feature>
<protein>
    <recommendedName>
        <fullName evidence="1">Small ribosomal subunit protein uS7</fullName>
    </recommendedName>
    <alternativeName>
        <fullName evidence="2">30S ribosomal protein S7</fullName>
    </alternativeName>
</protein>